<keyword id="KW-0067">ATP-binding</keyword>
<keyword id="KW-0997">Cell inner membrane</keyword>
<keyword id="KW-1003">Cell membrane</keyword>
<keyword id="KW-0418">Kinase</keyword>
<keyword id="KW-0472">Membrane</keyword>
<keyword id="KW-0547">Nucleotide-binding</keyword>
<keyword id="KW-0808">Transferase</keyword>
<keyword id="KW-0812">Transmembrane</keyword>
<keyword id="KW-1133">Transmembrane helix</keyword>
<keyword id="KW-0831">Ubiquinone biosynthesis</keyword>
<comment type="function">
    <text evidence="1 2">Is probably a protein kinase regulator of UbiI activity which is involved in aerobic coenzyme Q (ubiquinone) biosynthesis. Required for the expression of 2'-N-acetyltransferase.</text>
</comment>
<comment type="pathway">
    <text>Cofactor biosynthesis; ubiquinone biosynthesis [regulation].</text>
</comment>
<comment type="subcellular location">
    <subcellularLocation>
        <location evidence="1">Cell inner membrane</location>
        <topology evidence="1">Multi-pass membrane protein</topology>
    </subcellularLocation>
</comment>
<comment type="disruption phenotype">
    <text evidence="2">Cells lacking this gene fail to produce coenzyme Q8, and accumulate octaprenylphenol (OPP).</text>
</comment>
<comment type="similarity">
    <text evidence="1">Belongs to the ABC1 family. UbiB subfamily.</text>
</comment>
<name>UBIB_PROST</name>
<proteinExistence type="evidence at protein level"/>
<dbReference type="EC" id="2.7.-.-" evidence="1"/>
<dbReference type="EMBL" id="AF002165">
    <property type="protein sequence ID" value="AAB96577.1"/>
    <property type="molecule type" value="Genomic_DNA"/>
</dbReference>
<dbReference type="PIR" id="T51162">
    <property type="entry name" value="T51162"/>
</dbReference>
<dbReference type="RefSeq" id="WP_163885611.1">
    <property type="nucleotide sequence ID" value="NZ_VKSA01000030.1"/>
</dbReference>
<dbReference type="SMR" id="O07443"/>
<dbReference type="STRING" id="588.BGK56_10840"/>
<dbReference type="UniPathway" id="UPA00232"/>
<dbReference type="GO" id="GO:0005886">
    <property type="term" value="C:plasma membrane"/>
    <property type="evidence" value="ECO:0007669"/>
    <property type="project" value="UniProtKB-SubCell"/>
</dbReference>
<dbReference type="GO" id="GO:0005524">
    <property type="term" value="F:ATP binding"/>
    <property type="evidence" value="ECO:0007669"/>
    <property type="project" value="UniProtKB-KW"/>
</dbReference>
<dbReference type="GO" id="GO:0004672">
    <property type="term" value="F:protein kinase activity"/>
    <property type="evidence" value="ECO:0007669"/>
    <property type="project" value="UniProtKB-UniRule"/>
</dbReference>
<dbReference type="GO" id="GO:0010795">
    <property type="term" value="P:regulation of ubiquinone biosynthetic process"/>
    <property type="evidence" value="ECO:0007669"/>
    <property type="project" value="UniProtKB-UniRule"/>
</dbReference>
<dbReference type="GO" id="GO:0006744">
    <property type="term" value="P:ubiquinone biosynthetic process"/>
    <property type="evidence" value="ECO:0007669"/>
    <property type="project" value="UniProtKB-UniPathway"/>
</dbReference>
<dbReference type="CDD" id="cd13972">
    <property type="entry name" value="UbiB"/>
    <property type="match status" value="1"/>
</dbReference>
<dbReference type="HAMAP" id="MF_00414">
    <property type="entry name" value="UbiB"/>
    <property type="match status" value="1"/>
</dbReference>
<dbReference type="InterPro" id="IPR004147">
    <property type="entry name" value="ABC1_dom"/>
</dbReference>
<dbReference type="InterPro" id="IPR011009">
    <property type="entry name" value="Kinase-like_dom_sf"/>
</dbReference>
<dbReference type="InterPro" id="IPR010232">
    <property type="entry name" value="UbiB"/>
</dbReference>
<dbReference type="InterPro" id="IPR045308">
    <property type="entry name" value="UbiB_bact"/>
</dbReference>
<dbReference type="InterPro" id="IPR050154">
    <property type="entry name" value="UbiB_kinase"/>
</dbReference>
<dbReference type="NCBIfam" id="NF003404">
    <property type="entry name" value="PRK04750.1"/>
    <property type="match status" value="1"/>
</dbReference>
<dbReference type="NCBIfam" id="TIGR01982">
    <property type="entry name" value="UbiB"/>
    <property type="match status" value="1"/>
</dbReference>
<dbReference type="PANTHER" id="PTHR10566">
    <property type="entry name" value="CHAPERONE-ACTIVITY OF BC1 COMPLEX CABC1 -RELATED"/>
    <property type="match status" value="1"/>
</dbReference>
<dbReference type="PANTHER" id="PTHR10566:SF113">
    <property type="entry name" value="PROTEIN ACTIVITY OF BC1 COMPLEX KINASE 7, CHLOROPLASTIC"/>
    <property type="match status" value="1"/>
</dbReference>
<dbReference type="Pfam" id="PF03109">
    <property type="entry name" value="ABC1"/>
    <property type="match status" value="1"/>
</dbReference>
<dbReference type="SUPFAM" id="SSF56112">
    <property type="entry name" value="Protein kinase-like (PK-like)"/>
    <property type="match status" value="1"/>
</dbReference>
<organism>
    <name type="scientific">Providencia stuartii</name>
    <dbReference type="NCBI Taxonomy" id="588"/>
    <lineage>
        <taxon>Bacteria</taxon>
        <taxon>Pseudomonadati</taxon>
        <taxon>Pseudomonadota</taxon>
        <taxon>Gammaproteobacteria</taxon>
        <taxon>Enterobacterales</taxon>
        <taxon>Morganellaceae</taxon>
        <taxon>Providencia</taxon>
    </lineage>
</organism>
<reference key="1">
    <citation type="journal article" date="1998" name="J. Bacteriol.">
        <title>Identification and characterization of aarF, a locus required for production of ubiquinone in Providencia stuartii and Escherichia coli and for expression of 2'-N-acetyltransferase in P. stuartii.</title>
        <authorList>
            <person name="Macinga D.R."/>
            <person name="Cook G.M."/>
            <person name="Poole R.K."/>
            <person name="Rather P.N."/>
        </authorList>
    </citation>
    <scope>NUCLEOTIDE SEQUENCE [GENOMIC DNA]</scope>
    <source>
        <strain>PR50</strain>
    </source>
</reference>
<reference key="2">
    <citation type="journal article" date="2000" name="J. Bacteriol.">
        <title>Identification of Escherichia coli ubiB, a gene required for the first monooxygenase step in ubiquinone biosynthesis.</title>
        <authorList>
            <person name="Poon W.W."/>
            <person name="Davis D.E."/>
            <person name="Ha H.T."/>
            <person name="Jonassen T."/>
            <person name="Rather P.N."/>
            <person name="Clarke C.F."/>
        </authorList>
    </citation>
    <scope>FUNCTION IN UBIQUINONE BIOSYNTHESIS</scope>
    <scope>DISRUPTION PHENOTYPE</scope>
    <source>
        <strain>PR50</strain>
    </source>
</reference>
<evidence type="ECO:0000255" key="1">
    <source>
        <dbReference type="HAMAP-Rule" id="MF_00414"/>
    </source>
</evidence>
<evidence type="ECO:0000269" key="2">
    <source>
    </source>
</evidence>
<protein>
    <recommendedName>
        <fullName evidence="1">Probable protein kinase UbiB</fullName>
        <ecNumber evidence="1">2.7.-.-</ecNumber>
    </recommendedName>
    <alternativeName>
        <fullName>Aminoglycoside acetyltransferase regulator</fullName>
    </alternativeName>
    <alternativeName>
        <fullName evidence="1">Ubiquinone biosynthesis protein UbiB</fullName>
    </alternativeName>
</protein>
<feature type="chain" id="PRO_0000200713" description="Probable protein kinase UbiB">
    <location>
        <begin position="1"/>
        <end position="544"/>
    </location>
</feature>
<feature type="transmembrane region" description="Helical" evidence="1">
    <location>
        <begin position="499"/>
        <end position="519"/>
    </location>
</feature>
<feature type="transmembrane region" description="Helical" evidence="1">
    <location>
        <begin position="522"/>
        <end position="542"/>
    </location>
</feature>
<feature type="domain" description="Protein kinase" evidence="1">
    <location>
        <begin position="123"/>
        <end position="500"/>
    </location>
</feature>
<feature type="active site" description="Proton acceptor" evidence="1">
    <location>
        <position position="286"/>
    </location>
</feature>
<feature type="binding site" evidence="1">
    <location>
        <begin position="129"/>
        <end position="137"/>
    </location>
    <ligand>
        <name>ATP</name>
        <dbReference type="ChEBI" id="CHEBI:30616"/>
    </ligand>
</feature>
<feature type="binding site" evidence="1">
    <location>
        <position position="152"/>
    </location>
    <ligand>
        <name>ATP</name>
        <dbReference type="ChEBI" id="CHEBI:30616"/>
    </ligand>
</feature>
<sequence length="544" mass="62599">MTPGEIKRLYFIIRVFLSYGLDELIPKVKLTLPLRIGRFGFFWIKNQHKGKELGERLRLALQELGPVWIKFGQMLSTRRDLFPLAIADQLSLLQDKVASFDGKLARRYIEESLGGPLEQWFDDFDEKALASASIAQVHTAKLKENGKEVVLKVIRPDILPVIKADVKLMYRIANWVPLLPDGRRLRPKEVVREYEKTLIDELNLLRESANAIQLRRNFENSSMLYVPEVYADYCRENVMVMERIYGIPVSDIAALKAQGTNMKILAERGVKVFFTQVFRDSFFHADMHPGNIFVSYEHPEDPLYIGIDCGIVGSLNKEDKRYLAENFIAFFNRDYRKVAELHVDSGWVPADTNVEDFEFAIRTVCEPIFEKPLAEISFGHVLLNLFNTARRFNMEVQPQLVLLQKTLLYIEGLGRQLYPQLDLWKTAKPFLEDWVHSQVGIPAITQALKEKAPYWAEKMPEIPDLIYGALRQHKFLQSNIEQLSEQLKQQRNKQRKSQYLLGIGATLILCGSLFFISASNRMAIAFMSAGALSWIIGWYKSGKS</sequence>
<accession>O07443</accession>
<gene>
    <name evidence="1" type="primary">ubiB</name>
    <name type="synonym">aarF</name>
</gene>